<reference key="1">
    <citation type="journal article" date="2007" name="Nat. Biotechnol.">
        <title>Genome sequencing and analysis of the versatile cell factory Aspergillus niger CBS 513.88.</title>
        <authorList>
            <person name="Pel H.J."/>
            <person name="de Winde J.H."/>
            <person name="Archer D.B."/>
            <person name="Dyer P.S."/>
            <person name="Hofmann G."/>
            <person name="Schaap P.J."/>
            <person name="Turner G."/>
            <person name="de Vries R.P."/>
            <person name="Albang R."/>
            <person name="Albermann K."/>
            <person name="Andersen M.R."/>
            <person name="Bendtsen J.D."/>
            <person name="Benen J.A.E."/>
            <person name="van den Berg M."/>
            <person name="Breestraat S."/>
            <person name="Caddick M.X."/>
            <person name="Contreras R."/>
            <person name="Cornell M."/>
            <person name="Coutinho P.M."/>
            <person name="Danchin E.G.J."/>
            <person name="Debets A.J.M."/>
            <person name="Dekker P."/>
            <person name="van Dijck P.W.M."/>
            <person name="van Dijk A."/>
            <person name="Dijkhuizen L."/>
            <person name="Driessen A.J.M."/>
            <person name="d'Enfert C."/>
            <person name="Geysens S."/>
            <person name="Goosen C."/>
            <person name="Groot G.S.P."/>
            <person name="de Groot P.W.J."/>
            <person name="Guillemette T."/>
            <person name="Henrissat B."/>
            <person name="Herweijer M."/>
            <person name="van den Hombergh J.P.T.W."/>
            <person name="van den Hondel C.A.M.J.J."/>
            <person name="van der Heijden R.T.J.M."/>
            <person name="van der Kaaij R.M."/>
            <person name="Klis F.M."/>
            <person name="Kools H.J."/>
            <person name="Kubicek C.P."/>
            <person name="van Kuyk P.A."/>
            <person name="Lauber J."/>
            <person name="Lu X."/>
            <person name="van der Maarel M.J.E.C."/>
            <person name="Meulenberg R."/>
            <person name="Menke H."/>
            <person name="Mortimer M.A."/>
            <person name="Nielsen J."/>
            <person name="Oliver S.G."/>
            <person name="Olsthoorn M."/>
            <person name="Pal K."/>
            <person name="van Peij N.N.M.E."/>
            <person name="Ram A.F.J."/>
            <person name="Rinas U."/>
            <person name="Roubos J.A."/>
            <person name="Sagt C.M.J."/>
            <person name="Schmoll M."/>
            <person name="Sun J."/>
            <person name="Ussery D."/>
            <person name="Varga J."/>
            <person name="Vervecken W."/>
            <person name="van de Vondervoort P.J.J."/>
            <person name="Wedler H."/>
            <person name="Woesten H.A.B."/>
            <person name="Zeng A.-P."/>
            <person name="van Ooyen A.J.J."/>
            <person name="Visser J."/>
            <person name="Stam H."/>
        </authorList>
    </citation>
    <scope>NUCLEOTIDE SEQUENCE [LARGE SCALE GENOMIC DNA]</scope>
    <source>
        <strain>ATCC MYA-4892 / CBS 513.88 / FGSC A1513</strain>
    </source>
</reference>
<feature type="chain" id="PRO_0000301835" description="Riboflavin kinase">
    <location>
        <begin position="1"/>
        <end position="214"/>
    </location>
</feature>
<feature type="region of interest" description="Disordered" evidence="3">
    <location>
        <begin position="1"/>
        <end position="27"/>
    </location>
</feature>
<feature type="active site" description="Nucleophile" evidence="1">
    <location>
        <position position="101"/>
    </location>
</feature>
<feature type="binding site" evidence="2">
    <location>
        <position position="44"/>
    </location>
    <ligand>
        <name>Mg(2+)</name>
        <dbReference type="ChEBI" id="CHEBI:18420"/>
    </ligand>
</feature>
<feature type="binding site" evidence="2">
    <location>
        <position position="46"/>
    </location>
    <ligand>
        <name>Mg(2+)</name>
        <dbReference type="ChEBI" id="CHEBI:18420"/>
    </ligand>
</feature>
<organism>
    <name type="scientific">Aspergillus niger (strain ATCC MYA-4892 / CBS 513.88 / FGSC A1513)</name>
    <dbReference type="NCBI Taxonomy" id="425011"/>
    <lineage>
        <taxon>Eukaryota</taxon>
        <taxon>Fungi</taxon>
        <taxon>Dikarya</taxon>
        <taxon>Ascomycota</taxon>
        <taxon>Pezizomycotina</taxon>
        <taxon>Eurotiomycetes</taxon>
        <taxon>Eurotiomycetidae</taxon>
        <taxon>Eurotiales</taxon>
        <taxon>Aspergillaceae</taxon>
        <taxon>Aspergillus</taxon>
        <taxon>Aspergillus subgen. Circumdati</taxon>
    </lineage>
</organism>
<accession>A2QFH1</accession>
<sequence>MRPDRPRDPVTGPDEGPESPYPIRMSGPVIKGFGRGSKELGIPTANIPADELSQHPELSVGVYYGVVALDPARFSTGETVLPAVLSIGYNPFYKNESKSIEIHIMPPLSAPSPTATTSTDGQVTFHKLPDFYGTPLNLLILGYIRPEYDYISSEALIEDIRVDCEVARRSLQRPAYRCYLDARAVEDPACGGDDCGIVVDAIDGGAMRGMRFCI</sequence>
<name>RIFK_ASPNC</name>
<comment type="function">
    <text evidence="1">Catalyzes the phosphorylation of riboflavin (vitamin B2) to form flavin mononucleotide (FMN) coenzyme.</text>
</comment>
<comment type="catalytic activity">
    <reaction>
        <text>riboflavin + ATP = FMN + ADP + H(+)</text>
        <dbReference type="Rhea" id="RHEA:14357"/>
        <dbReference type="ChEBI" id="CHEBI:15378"/>
        <dbReference type="ChEBI" id="CHEBI:30616"/>
        <dbReference type="ChEBI" id="CHEBI:57986"/>
        <dbReference type="ChEBI" id="CHEBI:58210"/>
        <dbReference type="ChEBI" id="CHEBI:456216"/>
        <dbReference type="EC" id="2.7.1.26"/>
    </reaction>
</comment>
<comment type="cofactor">
    <cofactor evidence="1">
        <name>Zn(2+)</name>
        <dbReference type="ChEBI" id="CHEBI:29105"/>
    </cofactor>
    <cofactor evidence="1">
        <name>Mg(2+)</name>
        <dbReference type="ChEBI" id="CHEBI:18420"/>
    </cofactor>
    <text evidence="1">Zinc or magnesium.</text>
</comment>
<comment type="pathway">
    <text>Cofactor biosynthesis; FMN biosynthesis; FMN from riboflavin (ATP route): step 1/1.</text>
</comment>
<comment type="similarity">
    <text evidence="4">Belongs to the flavokinase family.</text>
</comment>
<proteinExistence type="inferred from homology"/>
<evidence type="ECO:0000250" key="1"/>
<evidence type="ECO:0000250" key="2">
    <source>
        <dbReference type="UniProtKB" id="Q969G6"/>
    </source>
</evidence>
<evidence type="ECO:0000256" key="3">
    <source>
        <dbReference type="SAM" id="MobiDB-lite"/>
    </source>
</evidence>
<evidence type="ECO:0000305" key="4"/>
<keyword id="KW-0067">ATP-binding</keyword>
<keyword id="KW-0285">Flavoprotein</keyword>
<keyword id="KW-0288">FMN</keyword>
<keyword id="KW-0418">Kinase</keyword>
<keyword id="KW-0460">Magnesium</keyword>
<keyword id="KW-0479">Metal-binding</keyword>
<keyword id="KW-0547">Nucleotide-binding</keyword>
<keyword id="KW-1185">Reference proteome</keyword>
<keyword id="KW-0808">Transferase</keyword>
<keyword id="KW-0862">Zinc</keyword>
<protein>
    <recommendedName>
        <fullName>Riboflavin kinase</fullName>
        <ecNumber>2.7.1.26</ecNumber>
    </recommendedName>
    <alternativeName>
        <fullName>Flavin mononucleotide kinase 1</fullName>
    </alternativeName>
</protein>
<dbReference type="EC" id="2.7.1.26"/>
<dbReference type="EMBL" id="AM270040">
    <property type="protein sequence ID" value="CAK48882.1"/>
    <property type="molecule type" value="Genomic_DNA"/>
</dbReference>
<dbReference type="RefSeq" id="XP_001400582.2">
    <property type="nucleotide sequence ID" value="XM_001400545.2"/>
</dbReference>
<dbReference type="SMR" id="A2QFH1"/>
<dbReference type="EnsemblFungi" id="CAK48882">
    <property type="protein sequence ID" value="CAK48882"/>
    <property type="gene ID" value="An02g14530"/>
</dbReference>
<dbReference type="GeneID" id="4979992"/>
<dbReference type="KEGG" id="ang:An02g14530"/>
<dbReference type="VEuPathDB" id="FungiDB:An02g14530"/>
<dbReference type="HOGENOM" id="CLU_048437_3_2_1"/>
<dbReference type="UniPathway" id="UPA00276">
    <property type="reaction ID" value="UER00406"/>
</dbReference>
<dbReference type="Proteomes" id="UP000006706">
    <property type="component" value="Chromosome 4R"/>
</dbReference>
<dbReference type="GO" id="GO:0005739">
    <property type="term" value="C:mitochondrion"/>
    <property type="evidence" value="ECO:0007669"/>
    <property type="project" value="TreeGrafter"/>
</dbReference>
<dbReference type="GO" id="GO:0005524">
    <property type="term" value="F:ATP binding"/>
    <property type="evidence" value="ECO:0007669"/>
    <property type="project" value="UniProtKB-KW"/>
</dbReference>
<dbReference type="GO" id="GO:0046872">
    <property type="term" value="F:metal ion binding"/>
    <property type="evidence" value="ECO:0007669"/>
    <property type="project" value="UniProtKB-KW"/>
</dbReference>
<dbReference type="GO" id="GO:0008531">
    <property type="term" value="F:riboflavin kinase activity"/>
    <property type="evidence" value="ECO:0007669"/>
    <property type="project" value="UniProtKB-EC"/>
</dbReference>
<dbReference type="GO" id="GO:0009398">
    <property type="term" value="P:FMN biosynthetic process"/>
    <property type="evidence" value="ECO:0007669"/>
    <property type="project" value="UniProtKB-UniPathway"/>
</dbReference>
<dbReference type="GO" id="GO:0009231">
    <property type="term" value="P:riboflavin biosynthetic process"/>
    <property type="evidence" value="ECO:0007669"/>
    <property type="project" value="InterPro"/>
</dbReference>
<dbReference type="FunFam" id="2.40.30.30:FF:000008">
    <property type="entry name" value="Riboflavin kinase"/>
    <property type="match status" value="1"/>
</dbReference>
<dbReference type="Gene3D" id="2.40.30.30">
    <property type="entry name" value="Riboflavin kinase-like"/>
    <property type="match status" value="1"/>
</dbReference>
<dbReference type="InterPro" id="IPR023468">
    <property type="entry name" value="Riboflavin_kinase"/>
</dbReference>
<dbReference type="InterPro" id="IPR015865">
    <property type="entry name" value="Riboflavin_kinase_bac/euk"/>
</dbReference>
<dbReference type="InterPro" id="IPR023465">
    <property type="entry name" value="Riboflavin_kinase_dom_sf"/>
</dbReference>
<dbReference type="PANTHER" id="PTHR22749:SF6">
    <property type="entry name" value="RIBOFLAVIN KINASE"/>
    <property type="match status" value="1"/>
</dbReference>
<dbReference type="PANTHER" id="PTHR22749">
    <property type="entry name" value="RIBOFLAVIN KINASE/FMN ADENYLYLTRANSFERASE"/>
    <property type="match status" value="1"/>
</dbReference>
<dbReference type="Pfam" id="PF01687">
    <property type="entry name" value="Flavokinase"/>
    <property type="match status" value="1"/>
</dbReference>
<dbReference type="SMART" id="SM00904">
    <property type="entry name" value="Flavokinase"/>
    <property type="match status" value="1"/>
</dbReference>
<dbReference type="SUPFAM" id="SSF82114">
    <property type="entry name" value="Riboflavin kinase-like"/>
    <property type="match status" value="1"/>
</dbReference>
<gene>
    <name type="primary">fmn1</name>
    <name type="ORF">An02g14530</name>
</gene>